<name>SYL_YERE8</name>
<sequence>MQEQYRPEDIETQVQLHWQEKQTFKVTEDTSKEKYYCLSMLPYPSGRLHMGHVRNYTIGDVISRYQRMLGKNVLQPIGWDAFGLPAEGAAVKNNTAPAPWTYDNIEYMKNQLKLLGFGYDWDREIATCSPDYYRWEQWFFTKLYEKGMVYKKTSAVNWCPHDLTVLANEQVIDGCCWRCDTKVERKEIPQWFIKITDYADQLLNDLDTLESWPEQVKTMQRNWIGRSEGVDIVFNVADSEEKLSVYTTRPDTFMGVTYVAVAAGHPLSLQAAATNPALADFVAECRNTKVAEAEMATMEKKGMATGLYAIHPLTGEKLPIWAANFVLMDYGTGAVMAVPGHDARDWEFATKYNLPIKPVILAADGSEPDLSQEAMTEKGILFNSGEFDGLNYEDGFNAVADKLVALGVGQRKVNYRLRDWGVSRQRYWGAPIPMVTLEDGTVVPTPEDQLPVILPEDVVMDGITSPIKADPEWAKTTVNGVPGLRETDTFDTFMESSWYYARYTCPQFDKGMLDPAAANYWLPVDQYVGGIEHAIMHLMYFRFFHKLLRDAGLVDSDEPAKRLLCQGMVLADAFYYSGSNGERIWVSPVDAIVERDDKGRIIKATDAEGHELVYAGMSKMSKSKNNGIDPQVMVEKYGADTVRLFMMFASPAEMTLEWQESGVEGANRFLKRVWRLAYDHTAKGATAPLDVANLTEEQKSLRRDLHKTIAKVTDDVGRRQTFNTAIAAVMELMNKLGRAPQETEQDRALLQEALLAVVRMLYPFTPHVCFSLWQALGGEGDIDTAPWPVADEQAMVEDSKLVVVQVNGKVRGRITVPADATEQQVRERAGQEHLVAKYLDGVTVRKVIYVPGKLLNLVVG</sequence>
<comment type="catalytic activity">
    <reaction evidence="1">
        <text>tRNA(Leu) + L-leucine + ATP = L-leucyl-tRNA(Leu) + AMP + diphosphate</text>
        <dbReference type="Rhea" id="RHEA:11688"/>
        <dbReference type="Rhea" id="RHEA-COMP:9613"/>
        <dbReference type="Rhea" id="RHEA-COMP:9622"/>
        <dbReference type="ChEBI" id="CHEBI:30616"/>
        <dbReference type="ChEBI" id="CHEBI:33019"/>
        <dbReference type="ChEBI" id="CHEBI:57427"/>
        <dbReference type="ChEBI" id="CHEBI:78442"/>
        <dbReference type="ChEBI" id="CHEBI:78494"/>
        <dbReference type="ChEBI" id="CHEBI:456215"/>
        <dbReference type="EC" id="6.1.1.4"/>
    </reaction>
</comment>
<comment type="subcellular location">
    <subcellularLocation>
        <location evidence="1">Cytoplasm</location>
    </subcellularLocation>
</comment>
<comment type="similarity">
    <text evidence="1">Belongs to the class-I aminoacyl-tRNA synthetase family.</text>
</comment>
<keyword id="KW-0030">Aminoacyl-tRNA synthetase</keyword>
<keyword id="KW-0067">ATP-binding</keyword>
<keyword id="KW-0963">Cytoplasm</keyword>
<keyword id="KW-0436">Ligase</keyword>
<keyword id="KW-0547">Nucleotide-binding</keyword>
<keyword id="KW-0648">Protein biosynthesis</keyword>
<proteinExistence type="inferred from homology"/>
<protein>
    <recommendedName>
        <fullName evidence="1">Leucine--tRNA ligase</fullName>
        <ecNumber evidence="1">6.1.1.4</ecNumber>
    </recommendedName>
    <alternativeName>
        <fullName evidence="1">Leucyl-tRNA synthetase</fullName>
        <shortName evidence="1">LeuRS</shortName>
    </alternativeName>
</protein>
<organism>
    <name type="scientific">Yersinia enterocolitica serotype O:8 / biotype 1B (strain NCTC 13174 / 8081)</name>
    <dbReference type="NCBI Taxonomy" id="393305"/>
    <lineage>
        <taxon>Bacteria</taxon>
        <taxon>Pseudomonadati</taxon>
        <taxon>Pseudomonadota</taxon>
        <taxon>Gammaproteobacteria</taxon>
        <taxon>Enterobacterales</taxon>
        <taxon>Yersiniaceae</taxon>
        <taxon>Yersinia</taxon>
    </lineage>
</organism>
<evidence type="ECO:0000255" key="1">
    <source>
        <dbReference type="HAMAP-Rule" id="MF_00049"/>
    </source>
</evidence>
<feature type="chain" id="PRO_1000009467" description="Leucine--tRNA ligase">
    <location>
        <begin position="1"/>
        <end position="860"/>
    </location>
</feature>
<feature type="short sequence motif" description="'HIGH' region">
    <location>
        <begin position="42"/>
        <end position="52"/>
    </location>
</feature>
<feature type="short sequence motif" description="'KMSKS' region">
    <location>
        <begin position="619"/>
        <end position="623"/>
    </location>
</feature>
<feature type="binding site" evidence="1">
    <location>
        <position position="622"/>
    </location>
    <ligand>
        <name>ATP</name>
        <dbReference type="ChEBI" id="CHEBI:30616"/>
    </ligand>
</feature>
<gene>
    <name evidence="1" type="primary">leuS</name>
    <name type="ordered locus">YE2996</name>
</gene>
<dbReference type="EC" id="6.1.1.4" evidence="1"/>
<dbReference type="EMBL" id="AM286415">
    <property type="protein sequence ID" value="CAL13035.1"/>
    <property type="molecule type" value="Genomic_DNA"/>
</dbReference>
<dbReference type="RefSeq" id="WP_011816835.1">
    <property type="nucleotide sequence ID" value="NC_008800.1"/>
</dbReference>
<dbReference type="RefSeq" id="YP_001007185.1">
    <property type="nucleotide sequence ID" value="NC_008800.1"/>
</dbReference>
<dbReference type="SMR" id="A1JQ25"/>
<dbReference type="KEGG" id="yen:YE2996"/>
<dbReference type="PATRIC" id="fig|393305.7.peg.3191"/>
<dbReference type="eggNOG" id="COG0495">
    <property type="taxonomic scope" value="Bacteria"/>
</dbReference>
<dbReference type="HOGENOM" id="CLU_004427_0_0_6"/>
<dbReference type="OrthoDB" id="9810365at2"/>
<dbReference type="Proteomes" id="UP000000642">
    <property type="component" value="Chromosome"/>
</dbReference>
<dbReference type="GO" id="GO:0005829">
    <property type="term" value="C:cytosol"/>
    <property type="evidence" value="ECO:0007669"/>
    <property type="project" value="TreeGrafter"/>
</dbReference>
<dbReference type="GO" id="GO:0002161">
    <property type="term" value="F:aminoacyl-tRNA deacylase activity"/>
    <property type="evidence" value="ECO:0007669"/>
    <property type="project" value="InterPro"/>
</dbReference>
<dbReference type="GO" id="GO:0005524">
    <property type="term" value="F:ATP binding"/>
    <property type="evidence" value="ECO:0007669"/>
    <property type="project" value="UniProtKB-UniRule"/>
</dbReference>
<dbReference type="GO" id="GO:0004823">
    <property type="term" value="F:leucine-tRNA ligase activity"/>
    <property type="evidence" value="ECO:0007669"/>
    <property type="project" value="UniProtKB-UniRule"/>
</dbReference>
<dbReference type="GO" id="GO:0006429">
    <property type="term" value="P:leucyl-tRNA aminoacylation"/>
    <property type="evidence" value="ECO:0007669"/>
    <property type="project" value="UniProtKB-UniRule"/>
</dbReference>
<dbReference type="CDD" id="cd07958">
    <property type="entry name" value="Anticodon_Ia_Leu_BEm"/>
    <property type="match status" value="1"/>
</dbReference>
<dbReference type="CDD" id="cd00812">
    <property type="entry name" value="LeuRS_core"/>
    <property type="match status" value="1"/>
</dbReference>
<dbReference type="FunFam" id="1.10.730.10:FF:000002">
    <property type="entry name" value="Leucine--tRNA ligase"/>
    <property type="match status" value="2"/>
</dbReference>
<dbReference type="FunFam" id="2.20.28.290:FF:000001">
    <property type="entry name" value="Leucine--tRNA ligase"/>
    <property type="match status" value="1"/>
</dbReference>
<dbReference type="FunFam" id="3.10.20.590:FF:000001">
    <property type="entry name" value="Leucine--tRNA ligase"/>
    <property type="match status" value="1"/>
</dbReference>
<dbReference type="FunFam" id="3.40.50.620:FF:000003">
    <property type="entry name" value="Leucine--tRNA ligase"/>
    <property type="match status" value="1"/>
</dbReference>
<dbReference type="FunFam" id="3.40.50.620:FF:000124">
    <property type="entry name" value="Leucine--tRNA ligase"/>
    <property type="match status" value="1"/>
</dbReference>
<dbReference type="FunFam" id="3.90.740.10:FF:000012">
    <property type="entry name" value="Leucine--tRNA ligase"/>
    <property type="match status" value="1"/>
</dbReference>
<dbReference type="Gene3D" id="2.20.28.290">
    <property type="match status" value="1"/>
</dbReference>
<dbReference type="Gene3D" id="3.10.20.590">
    <property type="match status" value="1"/>
</dbReference>
<dbReference type="Gene3D" id="3.40.50.620">
    <property type="entry name" value="HUPs"/>
    <property type="match status" value="2"/>
</dbReference>
<dbReference type="Gene3D" id="1.10.730.10">
    <property type="entry name" value="Isoleucyl-tRNA Synthetase, Domain 1"/>
    <property type="match status" value="2"/>
</dbReference>
<dbReference type="Gene3D" id="3.90.740.10">
    <property type="entry name" value="Valyl/Leucyl/Isoleucyl-tRNA synthetase, editing domain"/>
    <property type="match status" value="1"/>
</dbReference>
<dbReference type="HAMAP" id="MF_00049_B">
    <property type="entry name" value="Leu_tRNA_synth_B"/>
    <property type="match status" value="1"/>
</dbReference>
<dbReference type="InterPro" id="IPR001412">
    <property type="entry name" value="aa-tRNA-synth_I_CS"/>
</dbReference>
<dbReference type="InterPro" id="IPR002300">
    <property type="entry name" value="aa-tRNA-synth_Ia"/>
</dbReference>
<dbReference type="InterPro" id="IPR002302">
    <property type="entry name" value="Leu-tRNA-ligase"/>
</dbReference>
<dbReference type="InterPro" id="IPR025709">
    <property type="entry name" value="Leu_tRNA-synth_edit"/>
</dbReference>
<dbReference type="InterPro" id="IPR013155">
    <property type="entry name" value="M/V/L/I-tRNA-synth_anticd-bd"/>
</dbReference>
<dbReference type="InterPro" id="IPR015413">
    <property type="entry name" value="Methionyl/Leucyl_tRNA_Synth"/>
</dbReference>
<dbReference type="InterPro" id="IPR014729">
    <property type="entry name" value="Rossmann-like_a/b/a_fold"/>
</dbReference>
<dbReference type="InterPro" id="IPR009080">
    <property type="entry name" value="tRNAsynth_Ia_anticodon-bd"/>
</dbReference>
<dbReference type="InterPro" id="IPR009008">
    <property type="entry name" value="Val/Leu/Ile-tRNA-synth_edit"/>
</dbReference>
<dbReference type="NCBIfam" id="TIGR00396">
    <property type="entry name" value="leuS_bact"/>
    <property type="match status" value="1"/>
</dbReference>
<dbReference type="PANTHER" id="PTHR43740:SF2">
    <property type="entry name" value="LEUCINE--TRNA LIGASE, MITOCHONDRIAL"/>
    <property type="match status" value="1"/>
</dbReference>
<dbReference type="PANTHER" id="PTHR43740">
    <property type="entry name" value="LEUCYL-TRNA SYNTHETASE"/>
    <property type="match status" value="1"/>
</dbReference>
<dbReference type="Pfam" id="PF08264">
    <property type="entry name" value="Anticodon_1"/>
    <property type="match status" value="1"/>
</dbReference>
<dbReference type="Pfam" id="PF00133">
    <property type="entry name" value="tRNA-synt_1"/>
    <property type="match status" value="2"/>
</dbReference>
<dbReference type="Pfam" id="PF13603">
    <property type="entry name" value="tRNA-synt_1_2"/>
    <property type="match status" value="1"/>
</dbReference>
<dbReference type="Pfam" id="PF09334">
    <property type="entry name" value="tRNA-synt_1g"/>
    <property type="match status" value="1"/>
</dbReference>
<dbReference type="PRINTS" id="PR00985">
    <property type="entry name" value="TRNASYNTHLEU"/>
</dbReference>
<dbReference type="SUPFAM" id="SSF47323">
    <property type="entry name" value="Anticodon-binding domain of a subclass of class I aminoacyl-tRNA synthetases"/>
    <property type="match status" value="1"/>
</dbReference>
<dbReference type="SUPFAM" id="SSF52374">
    <property type="entry name" value="Nucleotidylyl transferase"/>
    <property type="match status" value="1"/>
</dbReference>
<dbReference type="SUPFAM" id="SSF50677">
    <property type="entry name" value="ValRS/IleRS/LeuRS editing domain"/>
    <property type="match status" value="1"/>
</dbReference>
<dbReference type="PROSITE" id="PS00178">
    <property type="entry name" value="AA_TRNA_LIGASE_I"/>
    <property type="match status" value="1"/>
</dbReference>
<reference key="1">
    <citation type="journal article" date="2006" name="PLoS Genet.">
        <title>The complete genome sequence and comparative genome analysis of the high pathogenicity Yersinia enterocolitica strain 8081.</title>
        <authorList>
            <person name="Thomson N.R."/>
            <person name="Howard S."/>
            <person name="Wren B.W."/>
            <person name="Holden M.T.G."/>
            <person name="Crossman L."/>
            <person name="Challis G.L."/>
            <person name="Churcher C."/>
            <person name="Mungall K."/>
            <person name="Brooks K."/>
            <person name="Chillingworth T."/>
            <person name="Feltwell T."/>
            <person name="Abdellah Z."/>
            <person name="Hauser H."/>
            <person name="Jagels K."/>
            <person name="Maddison M."/>
            <person name="Moule S."/>
            <person name="Sanders M."/>
            <person name="Whitehead S."/>
            <person name="Quail M.A."/>
            <person name="Dougan G."/>
            <person name="Parkhill J."/>
            <person name="Prentice M.B."/>
        </authorList>
    </citation>
    <scope>NUCLEOTIDE SEQUENCE [LARGE SCALE GENOMIC DNA]</scope>
    <source>
        <strain>NCTC 13174 / 8081</strain>
    </source>
</reference>
<accession>A1JQ25</accession>